<dbReference type="EMBL" id="CP000003">
    <property type="protein sequence ID" value="AAT87933.1"/>
    <property type="molecule type" value="Genomic_DNA"/>
</dbReference>
<dbReference type="RefSeq" id="WP_002982186.1">
    <property type="nucleotide sequence ID" value="NC_006086.1"/>
</dbReference>
<dbReference type="SMR" id="Q5X9I0"/>
<dbReference type="KEGG" id="spa:M6_Spy1798"/>
<dbReference type="HOGENOM" id="CLU_040469_3_2_9"/>
<dbReference type="Proteomes" id="UP000001167">
    <property type="component" value="Chromosome"/>
</dbReference>
<dbReference type="GO" id="GO:0005829">
    <property type="term" value="C:cytosol"/>
    <property type="evidence" value="ECO:0007669"/>
    <property type="project" value="TreeGrafter"/>
</dbReference>
<dbReference type="GO" id="GO:0005524">
    <property type="term" value="F:ATP binding"/>
    <property type="evidence" value="ECO:0007669"/>
    <property type="project" value="UniProtKB-UniRule"/>
</dbReference>
<dbReference type="GO" id="GO:0016887">
    <property type="term" value="F:ATP hydrolysis activity"/>
    <property type="evidence" value="ECO:0007669"/>
    <property type="project" value="InterPro"/>
</dbReference>
<dbReference type="GO" id="GO:0140664">
    <property type="term" value="F:ATP-dependent DNA damage sensor activity"/>
    <property type="evidence" value="ECO:0007669"/>
    <property type="project" value="InterPro"/>
</dbReference>
<dbReference type="GO" id="GO:0003684">
    <property type="term" value="F:damaged DNA binding"/>
    <property type="evidence" value="ECO:0007669"/>
    <property type="project" value="UniProtKB-UniRule"/>
</dbReference>
<dbReference type="GO" id="GO:0003697">
    <property type="term" value="F:single-stranded DNA binding"/>
    <property type="evidence" value="ECO:0007669"/>
    <property type="project" value="UniProtKB-UniRule"/>
</dbReference>
<dbReference type="GO" id="GO:0006310">
    <property type="term" value="P:DNA recombination"/>
    <property type="evidence" value="ECO:0007669"/>
    <property type="project" value="UniProtKB-UniRule"/>
</dbReference>
<dbReference type="GO" id="GO:0006281">
    <property type="term" value="P:DNA repair"/>
    <property type="evidence" value="ECO:0007669"/>
    <property type="project" value="UniProtKB-UniRule"/>
</dbReference>
<dbReference type="GO" id="GO:0009432">
    <property type="term" value="P:SOS response"/>
    <property type="evidence" value="ECO:0007669"/>
    <property type="project" value="UniProtKB-UniRule"/>
</dbReference>
<dbReference type="CDD" id="cd00983">
    <property type="entry name" value="RecA"/>
    <property type="match status" value="1"/>
</dbReference>
<dbReference type="FunFam" id="3.40.50.300:FF:000087">
    <property type="entry name" value="Recombinase RecA"/>
    <property type="match status" value="1"/>
</dbReference>
<dbReference type="Gene3D" id="3.40.50.300">
    <property type="entry name" value="P-loop containing nucleotide triphosphate hydrolases"/>
    <property type="match status" value="1"/>
</dbReference>
<dbReference type="HAMAP" id="MF_00268">
    <property type="entry name" value="RecA"/>
    <property type="match status" value="1"/>
</dbReference>
<dbReference type="InterPro" id="IPR003593">
    <property type="entry name" value="AAA+_ATPase"/>
</dbReference>
<dbReference type="InterPro" id="IPR013765">
    <property type="entry name" value="DNA_recomb/repair_RecA"/>
</dbReference>
<dbReference type="InterPro" id="IPR020584">
    <property type="entry name" value="DNA_recomb/repair_RecA_CS"/>
</dbReference>
<dbReference type="InterPro" id="IPR027417">
    <property type="entry name" value="P-loop_NTPase"/>
</dbReference>
<dbReference type="InterPro" id="IPR049261">
    <property type="entry name" value="RecA-like_C"/>
</dbReference>
<dbReference type="InterPro" id="IPR049428">
    <property type="entry name" value="RecA-like_N"/>
</dbReference>
<dbReference type="InterPro" id="IPR020588">
    <property type="entry name" value="RecA_ATP-bd"/>
</dbReference>
<dbReference type="InterPro" id="IPR023400">
    <property type="entry name" value="RecA_C_sf"/>
</dbReference>
<dbReference type="InterPro" id="IPR020587">
    <property type="entry name" value="RecA_monomer-monomer_interface"/>
</dbReference>
<dbReference type="NCBIfam" id="TIGR02012">
    <property type="entry name" value="tigrfam_recA"/>
    <property type="match status" value="1"/>
</dbReference>
<dbReference type="PANTHER" id="PTHR45900:SF1">
    <property type="entry name" value="MITOCHONDRIAL DNA REPAIR PROTEIN RECA HOMOLOG-RELATED"/>
    <property type="match status" value="1"/>
</dbReference>
<dbReference type="PANTHER" id="PTHR45900">
    <property type="entry name" value="RECA"/>
    <property type="match status" value="1"/>
</dbReference>
<dbReference type="Pfam" id="PF00154">
    <property type="entry name" value="RecA"/>
    <property type="match status" value="1"/>
</dbReference>
<dbReference type="Pfam" id="PF21096">
    <property type="entry name" value="RecA_C"/>
    <property type="match status" value="1"/>
</dbReference>
<dbReference type="PRINTS" id="PR00142">
    <property type="entry name" value="RECA"/>
</dbReference>
<dbReference type="SMART" id="SM00382">
    <property type="entry name" value="AAA"/>
    <property type="match status" value="1"/>
</dbReference>
<dbReference type="SUPFAM" id="SSF52540">
    <property type="entry name" value="P-loop containing nucleoside triphosphate hydrolases"/>
    <property type="match status" value="1"/>
</dbReference>
<dbReference type="SUPFAM" id="SSF54752">
    <property type="entry name" value="RecA protein, C-terminal domain"/>
    <property type="match status" value="1"/>
</dbReference>
<dbReference type="PROSITE" id="PS00321">
    <property type="entry name" value="RECA_1"/>
    <property type="match status" value="1"/>
</dbReference>
<dbReference type="PROSITE" id="PS50162">
    <property type="entry name" value="RECA_2"/>
    <property type="match status" value="1"/>
</dbReference>
<dbReference type="PROSITE" id="PS50163">
    <property type="entry name" value="RECA_3"/>
    <property type="match status" value="1"/>
</dbReference>
<sequence length="378" mass="40646">MAKKLKKNEEITKKFGDERRKALDDALKNIEKDFGKGAVMRLGERAEQKVQVMSSGSLALDIALGAGGYPKGRIIEIYGPESSGKTTVALHAVAQAQKEGGIAAFIDAEHALDPAYAAALGVNIDELLLSQPDSGEQGLEIAGKLIDSGAVDLVVVDSVAALVPRAEIDGDIGDSHVGLQARMMSQAMRKLSASINKTKTIAIFINQLREKVGVMFGNPETTPGGRALKFYASVRLDVRGTTQIKGTGDQKDSSIGKETKIKVVKNKVAPPFKVAEVEIMYGEGISRTGELVKIASDLDIIQKAGAWFSYNGEKIGQGSENAKRYLAEHPELFDEIDRKVRVKFGLLEESEEESAMAVASEETDDLALDLDNGIEIED</sequence>
<feature type="chain" id="PRO_0000122863" description="Protein RecA">
    <location>
        <begin position="1"/>
        <end position="378"/>
    </location>
</feature>
<feature type="binding site" evidence="1">
    <location>
        <begin position="79"/>
        <end position="86"/>
    </location>
    <ligand>
        <name>ATP</name>
        <dbReference type="ChEBI" id="CHEBI:30616"/>
    </ligand>
</feature>
<reference key="1">
    <citation type="journal article" date="2004" name="J. Infect. Dis.">
        <title>Progress toward characterization of the group A Streptococcus metagenome: complete genome sequence of a macrolide-resistant serotype M6 strain.</title>
        <authorList>
            <person name="Banks D.J."/>
            <person name="Porcella S.F."/>
            <person name="Barbian K.D."/>
            <person name="Beres S.B."/>
            <person name="Philips L.E."/>
            <person name="Voyich J.M."/>
            <person name="DeLeo F.R."/>
            <person name="Martin J.M."/>
            <person name="Somerville G.A."/>
            <person name="Musser J.M."/>
        </authorList>
    </citation>
    <scope>NUCLEOTIDE SEQUENCE [LARGE SCALE GENOMIC DNA]</scope>
    <source>
        <strain>ATCC BAA-946 / MGAS10394</strain>
    </source>
</reference>
<accession>Q5X9I0</accession>
<organism>
    <name type="scientific">Streptococcus pyogenes serotype M6 (strain ATCC BAA-946 / MGAS10394)</name>
    <dbReference type="NCBI Taxonomy" id="286636"/>
    <lineage>
        <taxon>Bacteria</taxon>
        <taxon>Bacillati</taxon>
        <taxon>Bacillota</taxon>
        <taxon>Bacilli</taxon>
        <taxon>Lactobacillales</taxon>
        <taxon>Streptococcaceae</taxon>
        <taxon>Streptococcus</taxon>
    </lineage>
</organism>
<name>RECA_STRP6</name>
<proteinExistence type="inferred from homology"/>
<comment type="function">
    <text evidence="1">Can catalyze the hydrolysis of ATP in the presence of single-stranded DNA, the ATP-dependent uptake of single-stranded DNA by duplex DNA, and the ATP-dependent hybridization of homologous single-stranded DNAs. It interacts with LexA causing its activation and leading to its autocatalytic cleavage.</text>
</comment>
<comment type="subcellular location">
    <subcellularLocation>
        <location evidence="1">Cytoplasm</location>
    </subcellularLocation>
</comment>
<comment type="similarity">
    <text evidence="1">Belongs to the RecA family.</text>
</comment>
<gene>
    <name evidence="1" type="primary">recA</name>
    <name type="ordered locus">M6_Spy1798</name>
</gene>
<keyword id="KW-0067">ATP-binding</keyword>
<keyword id="KW-0963">Cytoplasm</keyword>
<keyword id="KW-0227">DNA damage</keyword>
<keyword id="KW-0233">DNA recombination</keyword>
<keyword id="KW-0234">DNA repair</keyword>
<keyword id="KW-0238">DNA-binding</keyword>
<keyword id="KW-0547">Nucleotide-binding</keyword>
<keyword id="KW-0742">SOS response</keyword>
<evidence type="ECO:0000255" key="1">
    <source>
        <dbReference type="HAMAP-Rule" id="MF_00268"/>
    </source>
</evidence>
<protein>
    <recommendedName>
        <fullName evidence="1">Protein RecA</fullName>
    </recommendedName>
    <alternativeName>
        <fullName evidence="1">Recombinase A</fullName>
    </alternativeName>
</protein>